<evidence type="ECO:0000250" key="1">
    <source>
        <dbReference type="UniProtKB" id="F5HCH8"/>
    </source>
</evidence>
<evidence type="ECO:0000255" key="2">
    <source>
        <dbReference type="HAMAP-Rule" id="MF_04036"/>
    </source>
</evidence>
<evidence type="ECO:0000255" key="3">
    <source>
        <dbReference type="PROSITE-ProRule" id="PRU01369"/>
    </source>
</evidence>
<feature type="signal peptide" evidence="2">
    <location>
        <begin position="1"/>
        <end position="30"/>
    </location>
</feature>
<feature type="chain" id="PRO_0000038282" description="Envelope glycoprotein L" evidence="2">
    <location>
        <begin position="31"/>
        <end position="278"/>
    </location>
</feature>
<feature type="domain" description="gL betaherpesvirus-type" evidence="3">
    <location>
        <begin position="43"/>
        <end position="256"/>
    </location>
</feature>
<feature type="disulfide bond" description="Interchain" evidence="3">
    <location>
        <position position="47"/>
    </location>
</feature>
<feature type="disulfide bond" description="Interchain" evidence="3">
    <location>
        <position position="54"/>
    </location>
</feature>
<feature type="disulfide bond" description="Interchain" evidence="3">
    <location>
        <position position="144"/>
    </location>
</feature>
<feature type="disulfide bond" evidence="3">
    <location>
        <begin position="154"/>
        <end position="159"/>
    </location>
</feature>
<accession>Q68669</accession>
<dbReference type="EMBL" id="U56914">
    <property type="protein sequence ID" value="AAA99165.1"/>
    <property type="molecule type" value="Genomic_DNA"/>
</dbReference>
<dbReference type="SMR" id="Q68669"/>
<dbReference type="GO" id="GO:0044177">
    <property type="term" value="C:host cell Golgi apparatus"/>
    <property type="evidence" value="ECO:0007669"/>
    <property type="project" value="UniProtKB-SubCell"/>
</dbReference>
<dbReference type="GO" id="GO:0020002">
    <property type="term" value="C:host cell plasma membrane"/>
    <property type="evidence" value="ECO:0007669"/>
    <property type="project" value="UniProtKB-SubCell"/>
</dbReference>
<dbReference type="GO" id="GO:0016020">
    <property type="term" value="C:membrane"/>
    <property type="evidence" value="ECO:0007669"/>
    <property type="project" value="UniProtKB-KW"/>
</dbReference>
<dbReference type="GO" id="GO:0019031">
    <property type="term" value="C:viral envelope"/>
    <property type="evidence" value="ECO:0007669"/>
    <property type="project" value="UniProtKB-UniRule"/>
</dbReference>
<dbReference type="GO" id="GO:0055036">
    <property type="term" value="C:virion membrane"/>
    <property type="evidence" value="ECO:0007669"/>
    <property type="project" value="UniProtKB-SubCell"/>
</dbReference>
<dbReference type="GO" id="GO:0098670">
    <property type="term" value="P:entry receptor-mediated virion attachment to host cell"/>
    <property type="evidence" value="ECO:0007669"/>
    <property type="project" value="UniProtKB-KW"/>
</dbReference>
<dbReference type="GO" id="GO:0019064">
    <property type="term" value="P:fusion of virus membrane with host plasma membrane"/>
    <property type="evidence" value="ECO:0007669"/>
    <property type="project" value="UniProtKB-UniRule"/>
</dbReference>
<dbReference type="GO" id="GO:0046718">
    <property type="term" value="P:symbiont entry into host cell"/>
    <property type="evidence" value="ECO:0007669"/>
    <property type="project" value="UniProtKB-KW"/>
</dbReference>
<dbReference type="HAMAP" id="MF_04036">
    <property type="entry name" value="HSV_GL_betahv"/>
    <property type="match status" value="1"/>
</dbReference>
<dbReference type="InterPro" id="IPR002689">
    <property type="entry name" value="Cytomegalo_gL"/>
</dbReference>
<dbReference type="Pfam" id="PF01801">
    <property type="entry name" value="Cytomega_gL"/>
    <property type="match status" value="1"/>
</dbReference>
<dbReference type="PROSITE" id="PS52025">
    <property type="entry name" value="GL_BHV"/>
    <property type="match status" value="1"/>
</dbReference>
<name>GL_HCMV3</name>
<organismHost>
    <name type="scientific">Homo sapiens</name>
    <name type="common">Human</name>
    <dbReference type="NCBI Taxonomy" id="9606"/>
</organismHost>
<proteinExistence type="inferred from homology"/>
<reference key="1">
    <citation type="submission" date="1996-04" db="EMBL/GenBank/DDBJ databases">
        <authorList>
            <person name="Milne R.S.B."/>
            <person name="Mathers K.E."/>
            <person name="Booth J.C."/>
        </authorList>
    </citation>
    <scope>NUCLEOTIDE SEQUENCE [GENOMIC DNA]</scope>
</reference>
<sequence>MCRRPDCGFSFSPGPVVLLWCCLLLPIVSSVAVSVAPTAAEKVPAECPELTRRCLLGEVFQGDKYESWLRPLVNVTGRDGPLSQLIRYRPVTPEAANSVLLDDAFLDTLALLYNNPDQLRALLTLLSSDTAPRWMTVMRGYSECGDGSPAVYTCVDDLCRGYDLTRLSYGRSIFTEHVLGFELVPPSLFNVVVAIRNEATRTNRAVRLPVSTAAAPEGITLFYGLYNAVKEFCLRHQLDPPLLRHLDKYYAGLPPELKQTRVNLPAHSRYGPQAVDAR</sequence>
<organism>
    <name type="scientific">Human cytomegalovirus (strain 2387)</name>
    <name type="common">HHV-5</name>
    <name type="synonym">Human herpesvirus 5</name>
    <dbReference type="NCBI Taxonomy" id="69163"/>
    <lineage>
        <taxon>Viruses</taxon>
        <taxon>Duplodnaviria</taxon>
        <taxon>Heunggongvirae</taxon>
        <taxon>Peploviricota</taxon>
        <taxon>Herviviricetes</taxon>
        <taxon>Herpesvirales</taxon>
        <taxon>Orthoherpesviridae</taxon>
        <taxon>Betaherpesvirinae</taxon>
        <taxon>Cytomegalovirus</taxon>
        <taxon>Cytomegalovirus humanbeta5</taxon>
        <taxon>Human cytomegalovirus</taxon>
    </lineage>
</organism>
<keyword id="KW-1015">Disulfide bond</keyword>
<keyword id="KW-1169">Fusion of virus membrane with host cell membrane</keyword>
<keyword id="KW-1168">Fusion of virus membrane with host membrane</keyword>
<keyword id="KW-0325">Glycoprotein</keyword>
<keyword id="KW-1032">Host cell membrane</keyword>
<keyword id="KW-1040">Host Golgi apparatus</keyword>
<keyword id="KW-1043">Host membrane</keyword>
<keyword id="KW-0945">Host-virus interaction</keyword>
<keyword id="KW-0472">Membrane</keyword>
<keyword id="KW-0732">Signal</keyword>
<keyword id="KW-1161">Viral attachment to host cell</keyword>
<keyword id="KW-1234">Viral attachment to host entry receptor</keyword>
<keyword id="KW-0261">Viral envelope protein</keyword>
<keyword id="KW-1162">Viral penetration into host cytoplasm</keyword>
<keyword id="KW-0946">Virion</keyword>
<keyword id="KW-1160">Virus entry into host cell</keyword>
<gene>
    <name evidence="2" type="primary">gL</name>
    <name type="synonym">UL115</name>
</gene>
<protein>
    <recommendedName>
        <fullName evidence="2">Envelope glycoprotein L</fullName>
        <shortName evidence="2">gL</shortName>
    </recommendedName>
</protein>
<comment type="function">
    <text evidence="1 2">The heterodimer glycoprotein H-glycoprotein L is required for the fusion of viral and plasma membranes leading to virus entry into the host cell. Acts as a functional inhibitor of gH and maintains gH in an inhibited form. Upon binding to host integrins, gL dissociates from gH leading to activation of the viral fusion glycoproteins gB and gH (By similarity). In human cytomegalovirus, forms two distincts complexes to mediate viral entry, a trimer and a pentamer at the surface of the virion envelope. The gH-gL-gO trimer is required for infection in fibroblasts by interacting with host PDGFRA, and in glioblastoma cells by interacting with host EPHA2. The gH-gL-UL128-UL130-UL131A pentamer is essential for viral entry in epithelial, endothelial and myeloid cells via interaction with host NRP2 (By similarity).</text>
</comment>
<comment type="subunit">
    <text evidence="1 2">Interacts with glycoprotein H (gH); this interaction is necessary for the correct processing and cell surface expression of gH (By similarity). Forms the envelope pentamer complex (PC) composed of gH, gL, UL128, UL130, and UL131A. The pentamer interacts with host NRP2. Forms the envelope trimer complex composed of gH, gL, and gO. The trimer interacts with host PDGFRA (By similarity). The trimer also interacts with host EPHA2 (By similarity).</text>
</comment>
<comment type="subcellular location">
    <subcellularLocation>
        <location evidence="2">Virion membrane</location>
        <topology evidence="2">Peripheral membrane protein</topology>
        <orientation evidence="2">Extracellular side</orientation>
    </subcellularLocation>
    <subcellularLocation>
        <location evidence="2">Host cell membrane</location>
        <topology evidence="2">Peripheral membrane protein</topology>
        <orientation evidence="2">Extracellular side</orientation>
    </subcellularLocation>
    <subcellularLocation>
        <location evidence="2">Host Golgi apparatus</location>
        <location evidence="2">Host trans-Golgi network</location>
    </subcellularLocation>
    <text evidence="2">gL associates with the extravirion surface through its binding to gH. During virion morphogenesis, this protein probably accumulates in the host trans-Golgi where secondary envelopment occurs.</text>
</comment>
<comment type="similarity">
    <text evidence="3">Belongs to the herpesviridae glycoprotein L (gL) family. Betaherpesvirinae gL subfamily.</text>
</comment>